<proteinExistence type="inferred from homology"/>
<keyword id="KW-0131">Cell cycle</keyword>
<keyword id="KW-0132">Cell division</keyword>
<keyword id="KW-0133">Cell shape</keyword>
<keyword id="KW-0961">Cell wall biogenesis/degradation</keyword>
<keyword id="KW-0963">Cytoplasm</keyword>
<keyword id="KW-0573">Peptidoglycan synthesis</keyword>
<keyword id="KW-0670">Pyruvate</keyword>
<keyword id="KW-0808">Transferase</keyword>
<organism>
    <name type="scientific">Paramagnetospirillum magneticum (strain ATCC 700264 / AMB-1)</name>
    <name type="common">Magnetospirillum magneticum</name>
    <dbReference type="NCBI Taxonomy" id="342108"/>
    <lineage>
        <taxon>Bacteria</taxon>
        <taxon>Pseudomonadati</taxon>
        <taxon>Pseudomonadota</taxon>
        <taxon>Alphaproteobacteria</taxon>
        <taxon>Rhodospirillales</taxon>
        <taxon>Magnetospirillaceae</taxon>
        <taxon>Paramagnetospirillum</taxon>
    </lineage>
</organism>
<comment type="function">
    <text evidence="1">Cell wall formation. Adds enolpyruvyl to UDP-N-acetylglucosamine.</text>
</comment>
<comment type="catalytic activity">
    <reaction evidence="1">
        <text>phosphoenolpyruvate + UDP-N-acetyl-alpha-D-glucosamine = UDP-N-acetyl-3-O-(1-carboxyvinyl)-alpha-D-glucosamine + phosphate</text>
        <dbReference type="Rhea" id="RHEA:18681"/>
        <dbReference type="ChEBI" id="CHEBI:43474"/>
        <dbReference type="ChEBI" id="CHEBI:57705"/>
        <dbReference type="ChEBI" id="CHEBI:58702"/>
        <dbReference type="ChEBI" id="CHEBI:68483"/>
        <dbReference type="EC" id="2.5.1.7"/>
    </reaction>
</comment>
<comment type="pathway">
    <text evidence="1">Cell wall biogenesis; peptidoglycan biosynthesis.</text>
</comment>
<comment type="subcellular location">
    <subcellularLocation>
        <location evidence="1">Cytoplasm</location>
    </subcellularLocation>
</comment>
<comment type="similarity">
    <text evidence="1">Belongs to the EPSP synthase family. MurA subfamily.</text>
</comment>
<gene>
    <name evidence="1" type="primary">murA</name>
    <name type="ordered locus">amb1982</name>
</gene>
<protein>
    <recommendedName>
        <fullName evidence="1">UDP-N-acetylglucosamine 1-carboxyvinyltransferase</fullName>
        <ecNumber evidence="1">2.5.1.7</ecNumber>
    </recommendedName>
    <alternativeName>
        <fullName evidence="1">Enoylpyruvate transferase</fullName>
    </alternativeName>
    <alternativeName>
        <fullName evidence="1">UDP-N-acetylglucosamine enolpyruvyl transferase</fullName>
        <shortName evidence="1">EPT</shortName>
    </alternativeName>
</protein>
<reference key="1">
    <citation type="journal article" date="2005" name="DNA Res.">
        <title>Complete genome sequence of the facultative anaerobic magnetotactic bacterium Magnetospirillum sp. strain AMB-1.</title>
        <authorList>
            <person name="Matsunaga T."/>
            <person name="Okamura Y."/>
            <person name="Fukuda Y."/>
            <person name="Wahyudi A.T."/>
            <person name="Murase Y."/>
            <person name="Takeyama H."/>
        </authorList>
    </citation>
    <scope>NUCLEOTIDE SEQUENCE [LARGE SCALE GENOMIC DNA]</scope>
    <source>
        <strain>ATCC 700264 / AMB-1</strain>
    </source>
</reference>
<name>MURA_PARM1</name>
<accession>Q2W5T9</accession>
<sequence length="432" mass="45542">MDRIRIVGGTPLKGTITIGGAKNAALALMPACLLTEETLALSNLPHLVDITTMANLLAQHGVTMALNGDAANGGHTGRVLELTAAHIGNTTAPYDLVRKMRASVLVLGPLLARFGEARVSLPGGCAIGTRPVDLHLKALEQMGAKIELDGGYIIASVQGRLKGAHVIFPQITVGGTENILMAATLAEGETVIANAAREPEITDLAECLVAMGAKIEGIGTGTLKVQGVERLHGAEYSVVPDRIETGTYAVAAAITRGDIELVGARFDLMESVNKVLTECGVHVEETPRGMRVRADQGEITGVDIMTEPYPGFPTDMQAQLMALMSTAKGASMITETIFENRFMHVPEMTRMGARINVHGSSAIVRGAPKLSGAQVMATDLRASVSLVLAALAAEGETIVNRVYHLDRGYERVEEKLAACGAKIERLKDGVAE</sequence>
<evidence type="ECO:0000255" key="1">
    <source>
        <dbReference type="HAMAP-Rule" id="MF_00111"/>
    </source>
</evidence>
<feature type="chain" id="PRO_1000023051" description="UDP-N-acetylglucosamine 1-carboxyvinyltransferase">
    <location>
        <begin position="1"/>
        <end position="432"/>
    </location>
</feature>
<feature type="active site" description="Proton donor" evidence="1">
    <location>
        <position position="125"/>
    </location>
</feature>
<feature type="binding site" evidence="1">
    <location>
        <begin position="22"/>
        <end position="23"/>
    </location>
    <ligand>
        <name>phosphoenolpyruvate</name>
        <dbReference type="ChEBI" id="CHEBI:58702"/>
    </ligand>
</feature>
<feature type="binding site" evidence="1">
    <location>
        <position position="101"/>
    </location>
    <ligand>
        <name>UDP-N-acetyl-alpha-D-glucosamine</name>
        <dbReference type="ChEBI" id="CHEBI:57705"/>
    </ligand>
</feature>
<feature type="binding site" evidence="1">
    <location>
        <begin position="130"/>
        <end position="134"/>
    </location>
    <ligand>
        <name>UDP-N-acetyl-alpha-D-glucosamine</name>
        <dbReference type="ChEBI" id="CHEBI:57705"/>
    </ligand>
</feature>
<feature type="binding site" evidence="1">
    <location>
        <position position="315"/>
    </location>
    <ligand>
        <name>UDP-N-acetyl-alpha-D-glucosamine</name>
        <dbReference type="ChEBI" id="CHEBI:57705"/>
    </ligand>
</feature>
<feature type="binding site" evidence="1">
    <location>
        <position position="337"/>
    </location>
    <ligand>
        <name>UDP-N-acetyl-alpha-D-glucosamine</name>
        <dbReference type="ChEBI" id="CHEBI:57705"/>
    </ligand>
</feature>
<feature type="modified residue" description="2-(S-cysteinyl)pyruvic acid O-phosphothioketal" evidence="1">
    <location>
        <position position="125"/>
    </location>
</feature>
<dbReference type="EC" id="2.5.1.7" evidence="1"/>
<dbReference type="EMBL" id="AP007255">
    <property type="protein sequence ID" value="BAE50786.1"/>
    <property type="molecule type" value="Genomic_DNA"/>
</dbReference>
<dbReference type="RefSeq" id="WP_011384385.1">
    <property type="nucleotide sequence ID" value="NC_007626.1"/>
</dbReference>
<dbReference type="SMR" id="Q2W5T9"/>
<dbReference type="STRING" id="342108.amb1982"/>
<dbReference type="KEGG" id="mag:amb1982"/>
<dbReference type="HOGENOM" id="CLU_027387_0_0_5"/>
<dbReference type="OrthoDB" id="9803760at2"/>
<dbReference type="UniPathway" id="UPA00219"/>
<dbReference type="Proteomes" id="UP000007058">
    <property type="component" value="Chromosome"/>
</dbReference>
<dbReference type="GO" id="GO:0005737">
    <property type="term" value="C:cytoplasm"/>
    <property type="evidence" value="ECO:0007669"/>
    <property type="project" value="UniProtKB-SubCell"/>
</dbReference>
<dbReference type="GO" id="GO:0008760">
    <property type="term" value="F:UDP-N-acetylglucosamine 1-carboxyvinyltransferase activity"/>
    <property type="evidence" value="ECO:0007669"/>
    <property type="project" value="UniProtKB-UniRule"/>
</dbReference>
<dbReference type="GO" id="GO:0051301">
    <property type="term" value="P:cell division"/>
    <property type="evidence" value="ECO:0007669"/>
    <property type="project" value="UniProtKB-KW"/>
</dbReference>
<dbReference type="GO" id="GO:0071555">
    <property type="term" value="P:cell wall organization"/>
    <property type="evidence" value="ECO:0007669"/>
    <property type="project" value="UniProtKB-KW"/>
</dbReference>
<dbReference type="GO" id="GO:0009252">
    <property type="term" value="P:peptidoglycan biosynthetic process"/>
    <property type="evidence" value="ECO:0007669"/>
    <property type="project" value="UniProtKB-UniRule"/>
</dbReference>
<dbReference type="GO" id="GO:0008360">
    <property type="term" value="P:regulation of cell shape"/>
    <property type="evidence" value="ECO:0007669"/>
    <property type="project" value="UniProtKB-KW"/>
</dbReference>
<dbReference type="GO" id="GO:0019277">
    <property type="term" value="P:UDP-N-acetylgalactosamine biosynthetic process"/>
    <property type="evidence" value="ECO:0007669"/>
    <property type="project" value="InterPro"/>
</dbReference>
<dbReference type="CDD" id="cd01555">
    <property type="entry name" value="UdpNAET"/>
    <property type="match status" value="1"/>
</dbReference>
<dbReference type="FunFam" id="3.65.10.10:FF:000001">
    <property type="entry name" value="UDP-N-acetylglucosamine 1-carboxyvinyltransferase"/>
    <property type="match status" value="1"/>
</dbReference>
<dbReference type="Gene3D" id="3.65.10.10">
    <property type="entry name" value="Enolpyruvate transferase domain"/>
    <property type="match status" value="2"/>
</dbReference>
<dbReference type="HAMAP" id="MF_00111">
    <property type="entry name" value="MurA"/>
    <property type="match status" value="1"/>
</dbReference>
<dbReference type="InterPro" id="IPR001986">
    <property type="entry name" value="Enolpyruvate_Tfrase_dom"/>
</dbReference>
<dbReference type="InterPro" id="IPR036968">
    <property type="entry name" value="Enolpyruvate_Tfrase_sf"/>
</dbReference>
<dbReference type="InterPro" id="IPR050068">
    <property type="entry name" value="MurA_subfamily"/>
</dbReference>
<dbReference type="InterPro" id="IPR013792">
    <property type="entry name" value="RNA3'P_cycl/enolpyr_Trfase_a/b"/>
</dbReference>
<dbReference type="InterPro" id="IPR005750">
    <property type="entry name" value="UDP_GlcNAc_COvinyl_MurA"/>
</dbReference>
<dbReference type="NCBIfam" id="TIGR01072">
    <property type="entry name" value="murA"/>
    <property type="match status" value="1"/>
</dbReference>
<dbReference type="NCBIfam" id="NF006873">
    <property type="entry name" value="PRK09369.1"/>
    <property type="match status" value="1"/>
</dbReference>
<dbReference type="PANTHER" id="PTHR43783">
    <property type="entry name" value="UDP-N-ACETYLGLUCOSAMINE 1-CARBOXYVINYLTRANSFERASE"/>
    <property type="match status" value="1"/>
</dbReference>
<dbReference type="PANTHER" id="PTHR43783:SF1">
    <property type="entry name" value="UDP-N-ACETYLGLUCOSAMINE 1-CARBOXYVINYLTRANSFERASE"/>
    <property type="match status" value="1"/>
</dbReference>
<dbReference type="Pfam" id="PF00275">
    <property type="entry name" value="EPSP_synthase"/>
    <property type="match status" value="1"/>
</dbReference>
<dbReference type="SUPFAM" id="SSF55205">
    <property type="entry name" value="EPT/RTPC-like"/>
    <property type="match status" value="1"/>
</dbReference>